<feature type="chain" id="PRO_1000213440" description="tRNA (guanine-N(7)-)-methyltransferase">
    <location>
        <begin position="1"/>
        <end position="215"/>
    </location>
</feature>
<feature type="active site" evidence="1">
    <location>
        <position position="118"/>
    </location>
</feature>
<feature type="binding site" evidence="2">
    <location>
        <position position="44"/>
    </location>
    <ligand>
        <name>S-adenosyl-L-methionine</name>
        <dbReference type="ChEBI" id="CHEBI:59789"/>
    </ligand>
</feature>
<feature type="binding site" evidence="2">
    <location>
        <position position="69"/>
    </location>
    <ligand>
        <name>S-adenosyl-L-methionine</name>
        <dbReference type="ChEBI" id="CHEBI:59789"/>
    </ligand>
</feature>
<feature type="binding site" evidence="2">
    <location>
        <position position="96"/>
    </location>
    <ligand>
        <name>S-adenosyl-L-methionine</name>
        <dbReference type="ChEBI" id="CHEBI:59789"/>
    </ligand>
</feature>
<feature type="binding site" evidence="2">
    <location>
        <position position="118"/>
    </location>
    <ligand>
        <name>S-adenosyl-L-methionine</name>
        <dbReference type="ChEBI" id="CHEBI:59789"/>
    </ligand>
</feature>
<feature type="binding site" evidence="2">
    <location>
        <position position="122"/>
    </location>
    <ligand>
        <name>substrate</name>
    </ligand>
</feature>
<feature type="binding site" evidence="2">
    <location>
        <position position="154"/>
    </location>
    <ligand>
        <name>substrate</name>
    </ligand>
</feature>
<feature type="binding site" evidence="2">
    <location>
        <begin position="191"/>
        <end position="194"/>
    </location>
    <ligand>
        <name>substrate</name>
    </ligand>
</feature>
<keyword id="KW-0489">Methyltransferase</keyword>
<keyword id="KW-0949">S-adenosyl-L-methionine</keyword>
<keyword id="KW-0808">Transferase</keyword>
<keyword id="KW-0819">tRNA processing</keyword>
<gene>
    <name evidence="2" type="primary">trmB</name>
    <name type="ordered locus">EAT1b_0718</name>
</gene>
<protein>
    <recommendedName>
        <fullName evidence="2">tRNA (guanine-N(7)-)-methyltransferase</fullName>
        <ecNumber evidence="2">2.1.1.33</ecNumber>
    </recommendedName>
    <alternativeName>
        <fullName evidence="2">tRNA (guanine(46)-N(7))-methyltransferase</fullName>
    </alternativeName>
    <alternativeName>
        <fullName evidence="2">tRNA(m7G46)-methyltransferase</fullName>
    </alternativeName>
</protein>
<evidence type="ECO:0000250" key="1"/>
<evidence type="ECO:0000255" key="2">
    <source>
        <dbReference type="HAMAP-Rule" id="MF_01057"/>
    </source>
</evidence>
<reference key="1">
    <citation type="journal article" date="2011" name="J. Bacteriol.">
        <title>Complete genome sequence of the Thermophilic Bacterium Exiguobacterium sp. AT1b.</title>
        <authorList>
            <person name="Vishnivetskaya T.A."/>
            <person name="Lucas S."/>
            <person name="Copeland A."/>
            <person name="Lapidus A."/>
            <person name="Glavina del Rio T."/>
            <person name="Dalin E."/>
            <person name="Tice H."/>
            <person name="Bruce D.C."/>
            <person name="Goodwin L.A."/>
            <person name="Pitluck S."/>
            <person name="Saunders E."/>
            <person name="Brettin T."/>
            <person name="Detter C."/>
            <person name="Han C."/>
            <person name="Larimer F."/>
            <person name="Land M.L."/>
            <person name="Hauser L.J."/>
            <person name="Kyrpides N.C."/>
            <person name="Ovchinnikova G."/>
            <person name="Kathariou S."/>
            <person name="Ramaley R.F."/>
            <person name="Rodrigues D.F."/>
            <person name="Hendrix C."/>
            <person name="Richardson P."/>
            <person name="Tiedje J.M."/>
        </authorList>
    </citation>
    <scope>NUCLEOTIDE SEQUENCE [LARGE SCALE GENOMIC DNA]</scope>
    <source>
        <strain>ATCC BAA-1283 / AT1b</strain>
    </source>
</reference>
<accession>C4L4Q4</accession>
<name>TRMB_EXISA</name>
<organism>
    <name type="scientific">Exiguobacterium sp. (strain ATCC BAA-1283 / AT1b)</name>
    <dbReference type="NCBI Taxonomy" id="360911"/>
    <lineage>
        <taxon>Bacteria</taxon>
        <taxon>Bacillati</taxon>
        <taxon>Bacillota</taxon>
        <taxon>Bacilli</taxon>
        <taxon>Bacillales</taxon>
        <taxon>Bacillales Family XII. Incertae Sedis</taxon>
        <taxon>Exiguobacterium</taxon>
    </lineage>
</organism>
<dbReference type="EC" id="2.1.1.33" evidence="2"/>
<dbReference type="EMBL" id="CP001615">
    <property type="protein sequence ID" value="ACQ69649.1"/>
    <property type="molecule type" value="Genomic_DNA"/>
</dbReference>
<dbReference type="RefSeq" id="WP_012726768.1">
    <property type="nucleotide sequence ID" value="NC_012673.1"/>
</dbReference>
<dbReference type="SMR" id="C4L4Q4"/>
<dbReference type="STRING" id="360911.EAT1b_0718"/>
<dbReference type="KEGG" id="eat:EAT1b_0718"/>
<dbReference type="eggNOG" id="COG0220">
    <property type="taxonomic scope" value="Bacteria"/>
</dbReference>
<dbReference type="HOGENOM" id="CLU_050910_2_1_9"/>
<dbReference type="OrthoDB" id="9802090at2"/>
<dbReference type="UniPathway" id="UPA00989"/>
<dbReference type="Proteomes" id="UP000000716">
    <property type="component" value="Chromosome"/>
</dbReference>
<dbReference type="GO" id="GO:0043527">
    <property type="term" value="C:tRNA methyltransferase complex"/>
    <property type="evidence" value="ECO:0007669"/>
    <property type="project" value="TreeGrafter"/>
</dbReference>
<dbReference type="GO" id="GO:0008176">
    <property type="term" value="F:tRNA (guanine(46)-N7)-methyltransferase activity"/>
    <property type="evidence" value="ECO:0007669"/>
    <property type="project" value="UniProtKB-UniRule"/>
</dbReference>
<dbReference type="CDD" id="cd02440">
    <property type="entry name" value="AdoMet_MTases"/>
    <property type="match status" value="1"/>
</dbReference>
<dbReference type="FunFam" id="3.40.50.150:FF:000035">
    <property type="entry name" value="tRNA (guanine-N(7)-)-methyltransferase"/>
    <property type="match status" value="1"/>
</dbReference>
<dbReference type="Gene3D" id="3.40.50.150">
    <property type="entry name" value="Vaccinia Virus protein VP39"/>
    <property type="match status" value="1"/>
</dbReference>
<dbReference type="HAMAP" id="MF_01057">
    <property type="entry name" value="tRNA_methyltr_TrmB"/>
    <property type="match status" value="1"/>
</dbReference>
<dbReference type="InterPro" id="IPR029063">
    <property type="entry name" value="SAM-dependent_MTases_sf"/>
</dbReference>
<dbReference type="InterPro" id="IPR003358">
    <property type="entry name" value="tRNA_(Gua-N-7)_MeTrfase_Trmb"/>
</dbReference>
<dbReference type="InterPro" id="IPR055361">
    <property type="entry name" value="tRNA_methyltr_TrmB_bact"/>
</dbReference>
<dbReference type="NCBIfam" id="NF001080">
    <property type="entry name" value="PRK00121.2-2"/>
    <property type="match status" value="1"/>
</dbReference>
<dbReference type="NCBIfam" id="TIGR00091">
    <property type="entry name" value="tRNA (guanosine(46)-N7)-methyltransferase TrmB"/>
    <property type="match status" value="1"/>
</dbReference>
<dbReference type="PANTHER" id="PTHR23417">
    <property type="entry name" value="3-DEOXY-D-MANNO-OCTULOSONIC-ACID TRANSFERASE/TRNA GUANINE-N 7 - -METHYLTRANSFERASE"/>
    <property type="match status" value="1"/>
</dbReference>
<dbReference type="PANTHER" id="PTHR23417:SF14">
    <property type="entry name" value="PENTACOTRIPEPTIDE-REPEAT REGION OF PRORP DOMAIN-CONTAINING PROTEIN"/>
    <property type="match status" value="1"/>
</dbReference>
<dbReference type="Pfam" id="PF02390">
    <property type="entry name" value="Methyltransf_4"/>
    <property type="match status" value="1"/>
</dbReference>
<dbReference type="SUPFAM" id="SSF53335">
    <property type="entry name" value="S-adenosyl-L-methionine-dependent methyltransferases"/>
    <property type="match status" value="1"/>
</dbReference>
<dbReference type="PROSITE" id="PS51625">
    <property type="entry name" value="SAM_MT_TRMB"/>
    <property type="match status" value="1"/>
</dbReference>
<sequence>MRLRHKPWAKEYMEAQEHVFIQHPEQLKGNWSTEFGNDHPLFIEVGSGKGQFILGMAKQHPDVNFIAIELFESVAVSIVQKLVETPMPNVRVLTVDAKRLVDYFEAGEVDRVYLNFSDPWPKTRHAKRRLTYKTFLATYEAILPKAGEIHFKTDNRGLFEYSLQSMSQYGMFFTEISLDLHVNEPEDNIRTEYEERFSALGQPIYRMEAVFRPKN</sequence>
<comment type="function">
    <text evidence="2">Catalyzes the formation of N(7)-methylguanine at position 46 (m7G46) in tRNA.</text>
</comment>
<comment type="catalytic activity">
    <reaction evidence="2">
        <text>guanosine(46) in tRNA + S-adenosyl-L-methionine = N(7)-methylguanosine(46) in tRNA + S-adenosyl-L-homocysteine</text>
        <dbReference type="Rhea" id="RHEA:42708"/>
        <dbReference type="Rhea" id="RHEA-COMP:10188"/>
        <dbReference type="Rhea" id="RHEA-COMP:10189"/>
        <dbReference type="ChEBI" id="CHEBI:57856"/>
        <dbReference type="ChEBI" id="CHEBI:59789"/>
        <dbReference type="ChEBI" id="CHEBI:74269"/>
        <dbReference type="ChEBI" id="CHEBI:74480"/>
        <dbReference type="EC" id="2.1.1.33"/>
    </reaction>
</comment>
<comment type="pathway">
    <text evidence="2">tRNA modification; N(7)-methylguanine-tRNA biosynthesis.</text>
</comment>
<comment type="similarity">
    <text evidence="2">Belongs to the class I-like SAM-binding methyltransferase superfamily. TrmB family.</text>
</comment>
<proteinExistence type="inferred from homology"/>